<evidence type="ECO:0000250" key="1"/>
<evidence type="ECO:0000255" key="2">
    <source>
        <dbReference type="HAMAP-Rule" id="MF_00403"/>
    </source>
</evidence>
<evidence type="ECO:0000305" key="3"/>
<dbReference type="EMBL" id="CP000627">
    <property type="protein sequence ID" value="ABQ21160.1"/>
    <property type="molecule type" value="Genomic_DNA"/>
</dbReference>
<dbReference type="EMBL" id="CP001235">
    <property type="protein sequence ID" value="ACP08425.1"/>
    <property type="molecule type" value="Genomic_DNA"/>
</dbReference>
<dbReference type="RefSeq" id="WP_012034321.1">
    <property type="nucleotide sequence ID" value="NZ_JAACZH010000038.1"/>
</dbReference>
<dbReference type="SMR" id="A5F3L3"/>
<dbReference type="KEGG" id="vco:VC0395_A2771"/>
<dbReference type="KEGG" id="vcr:VC395_0402"/>
<dbReference type="PATRIC" id="fig|345073.21.peg.391"/>
<dbReference type="eggNOG" id="COG0048">
    <property type="taxonomic scope" value="Bacteria"/>
</dbReference>
<dbReference type="HOGENOM" id="CLU_104295_1_2_6"/>
<dbReference type="OrthoDB" id="9802366at2"/>
<dbReference type="Proteomes" id="UP000000249">
    <property type="component" value="Chromosome 2"/>
</dbReference>
<dbReference type="GO" id="GO:0015935">
    <property type="term" value="C:small ribosomal subunit"/>
    <property type="evidence" value="ECO:0007669"/>
    <property type="project" value="InterPro"/>
</dbReference>
<dbReference type="GO" id="GO:0019843">
    <property type="term" value="F:rRNA binding"/>
    <property type="evidence" value="ECO:0007669"/>
    <property type="project" value="UniProtKB-UniRule"/>
</dbReference>
<dbReference type="GO" id="GO:0003735">
    <property type="term" value="F:structural constituent of ribosome"/>
    <property type="evidence" value="ECO:0007669"/>
    <property type="project" value="InterPro"/>
</dbReference>
<dbReference type="GO" id="GO:0000049">
    <property type="term" value="F:tRNA binding"/>
    <property type="evidence" value="ECO:0007669"/>
    <property type="project" value="UniProtKB-UniRule"/>
</dbReference>
<dbReference type="GO" id="GO:0006412">
    <property type="term" value="P:translation"/>
    <property type="evidence" value="ECO:0007669"/>
    <property type="project" value="UniProtKB-UniRule"/>
</dbReference>
<dbReference type="CDD" id="cd03368">
    <property type="entry name" value="Ribosomal_S12"/>
    <property type="match status" value="1"/>
</dbReference>
<dbReference type="FunFam" id="2.40.50.140:FF:000001">
    <property type="entry name" value="30S ribosomal protein S12"/>
    <property type="match status" value="1"/>
</dbReference>
<dbReference type="Gene3D" id="2.40.50.140">
    <property type="entry name" value="Nucleic acid-binding proteins"/>
    <property type="match status" value="1"/>
</dbReference>
<dbReference type="HAMAP" id="MF_00403_B">
    <property type="entry name" value="Ribosomal_uS12_B"/>
    <property type="match status" value="1"/>
</dbReference>
<dbReference type="InterPro" id="IPR012340">
    <property type="entry name" value="NA-bd_OB-fold"/>
</dbReference>
<dbReference type="InterPro" id="IPR006032">
    <property type="entry name" value="Ribosomal_uS12"/>
</dbReference>
<dbReference type="InterPro" id="IPR005679">
    <property type="entry name" value="Ribosomal_uS12_bac"/>
</dbReference>
<dbReference type="NCBIfam" id="TIGR00981">
    <property type="entry name" value="rpsL_bact"/>
    <property type="match status" value="1"/>
</dbReference>
<dbReference type="PANTHER" id="PTHR11652">
    <property type="entry name" value="30S RIBOSOMAL PROTEIN S12 FAMILY MEMBER"/>
    <property type="match status" value="1"/>
</dbReference>
<dbReference type="Pfam" id="PF00164">
    <property type="entry name" value="Ribosom_S12_S23"/>
    <property type="match status" value="1"/>
</dbReference>
<dbReference type="PIRSF" id="PIRSF002133">
    <property type="entry name" value="Ribosomal_S12/S23"/>
    <property type="match status" value="1"/>
</dbReference>
<dbReference type="PRINTS" id="PR01034">
    <property type="entry name" value="RIBOSOMALS12"/>
</dbReference>
<dbReference type="SUPFAM" id="SSF50249">
    <property type="entry name" value="Nucleic acid-binding proteins"/>
    <property type="match status" value="1"/>
</dbReference>
<dbReference type="PROSITE" id="PS00055">
    <property type="entry name" value="RIBOSOMAL_S12"/>
    <property type="match status" value="1"/>
</dbReference>
<reference key="1">
    <citation type="submission" date="2007-03" db="EMBL/GenBank/DDBJ databases">
        <authorList>
            <person name="Heidelberg J."/>
        </authorList>
    </citation>
    <scope>NUCLEOTIDE SEQUENCE [LARGE SCALE GENOMIC DNA]</scope>
    <source>
        <strain>ATCC 39541 / Classical Ogawa 395 / O395</strain>
    </source>
</reference>
<reference key="2">
    <citation type="journal article" date="2008" name="PLoS ONE">
        <title>A recalibrated molecular clock and independent origins for the cholera pandemic clones.</title>
        <authorList>
            <person name="Feng L."/>
            <person name="Reeves P.R."/>
            <person name="Lan R."/>
            <person name="Ren Y."/>
            <person name="Gao C."/>
            <person name="Zhou Z."/>
            <person name="Ren Y."/>
            <person name="Cheng J."/>
            <person name="Wang W."/>
            <person name="Wang J."/>
            <person name="Qian W."/>
            <person name="Li D."/>
            <person name="Wang L."/>
        </authorList>
    </citation>
    <scope>NUCLEOTIDE SEQUENCE [LARGE SCALE GENOMIC DNA]</scope>
    <source>
        <strain>ATCC 39541 / Classical Ogawa 395 / O395</strain>
    </source>
</reference>
<protein>
    <recommendedName>
        <fullName evidence="2">Small ribosomal subunit protein uS12</fullName>
    </recommendedName>
    <alternativeName>
        <fullName evidence="3">30S ribosomal protein S12</fullName>
    </alternativeName>
</protein>
<keyword id="KW-0488">Methylation</keyword>
<keyword id="KW-0687">Ribonucleoprotein</keyword>
<keyword id="KW-0689">Ribosomal protein</keyword>
<keyword id="KW-0694">RNA-binding</keyword>
<keyword id="KW-0699">rRNA-binding</keyword>
<keyword id="KW-0820">tRNA-binding</keyword>
<accession>A5F3L3</accession>
<accession>C3M4F3</accession>
<proteinExistence type="inferred from homology"/>
<comment type="function">
    <text evidence="2">With S4 and S5 plays an important role in translational accuracy.</text>
</comment>
<comment type="function">
    <text evidence="2">Interacts with and stabilizes bases of the 16S rRNA that are involved in tRNA selection in the A site and with the mRNA backbone. Located at the interface of the 30S and 50S subunits, it traverses the body of the 30S subunit contacting proteins on the other side and probably holding the rRNA structure together. The combined cluster of proteins S8, S12 and S17 appears to hold together the shoulder and platform of the 30S subunit.</text>
</comment>
<comment type="subunit">
    <text evidence="2">Part of the 30S ribosomal subunit. Contacts proteins S8 and S17. May interact with IF1 in the 30S initiation complex.</text>
</comment>
<comment type="similarity">
    <text evidence="2">Belongs to the universal ribosomal protein uS12 family.</text>
</comment>
<sequence>MATINQLVRKPRAKQVVKSNVPALAACPQKRGVCTRVYTTTPRKPNSALRKVCRVRLTNGFEVTSYIGGEGHNLQEHSVVLIRGGRVKDLPGVRYHTVRGALDCAGVNDRKQARSKYGVKRPKS</sequence>
<name>RS12_VIBC3</name>
<organism>
    <name type="scientific">Vibrio cholerae serotype O1 (strain ATCC 39541 / Classical Ogawa 395 / O395)</name>
    <dbReference type="NCBI Taxonomy" id="345073"/>
    <lineage>
        <taxon>Bacteria</taxon>
        <taxon>Pseudomonadati</taxon>
        <taxon>Pseudomonadota</taxon>
        <taxon>Gammaproteobacteria</taxon>
        <taxon>Vibrionales</taxon>
        <taxon>Vibrionaceae</taxon>
        <taxon>Vibrio</taxon>
    </lineage>
</organism>
<gene>
    <name evidence="2" type="primary">rpsL</name>
    <name type="ordered locus">VC0395_A2771</name>
    <name type="ordered locus">VC395_0402</name>
</gene>
<feature type="chain" id="PRO_1000072261" description="Small ribosomal subunit protein uS12">
    <location>
        <begin position="1"/>
        <end position="124"/>
    </location>
</feature>
<feature type="modified residue" description="3-methylthioaspartic acid" evidence="1">
    <location>
        <position position="89"/>
    </location>
</feature>
<feature type="sequence conflict" description="In Ref. 2; ACP08425." evidence="3" ref="2">
    <original>R</original>
    <variation>K</variation>
    <location>
        <position position="43"/>
    </location>
</feature>